<protein>
    <recommendedName>
        <fullName evidence="1">Small ribosomal subunit protein eS8</fullName>
    </recommendedName>
    <alternativeName>
        <fullName evidence="3">30S ribosomal protein S8e</fullName>
    </alternativeName>
</protein>
<accession>B0R639</accession>
<gene>
    <name evidence="1" type="primary">rps8e</name>
    <name type="ordered locus">OE_3357R</name>
</gene>
<proteinExistence type="inferred from homology"/>
<sequence>MQYQGRSKRSKTGARLRPRSKKSKSELGREPTETTVGEPRFRTVDVRGDAEKVRVLSTNVVNVATDSGAERATIEDVSANDANPNYARRNIITKGAIIETDAGTARVTSRPGQDGQVNATRVDE</sequence>
<keyword id="KW-0687">Ribonucleoprotein</keyword>
<keyword id="KW-0689">Ribosomal protein</keyword>
<feature type="chain" id="PRO_1000090255" description="Small ribosomal subunit protein eS8">
    <location>
        <begin position="1"/>
        <end position="124"/>
    </location>
</feature>
<feature type="region of interest" description="Disordered" evidence="2">
    <location>
        <begin position="1"/>
        <end position="40"/>
    </location>
</feature>
<feature type="region of interest" description="Disordered" evidence="2">
    <location>
        <begin position="102"/>
        <end position="124"/>
    </location>
</feature>
<feature type="compositionally biased region" description="Basic residues" evidence="2">
    <location>
        <begin position="1"/>
        <end position="22"/>
    </location>
</feature>
<feature type="compositionally biased region" description="Basic and acidic residues" evidence="2">
    <location>
        <begin position="23"/>
        <end position="32"/>
    </location>
</feature>
<feature type="compositionally biased region" description="Polar residues" evidence="2">
    <location>
        <begin position="106"/>
        <end position="124"/>
    </location>
</feature>
<evidence type="ECO:0000255" key="1">
    <source>
        <dbReference type="HAMAP-Rule" id="MF_00029"/>
    </source>
</evidence>
<evidence type="ECO:0000256" key="2">
    <source>
        <dbReference type="SAM" id="MobiDB-lite"/>
    </source>
</evidence>
<evidence type="ECO:0000305" key="3"/>
<dbReference type="EMBL" id="AM774415">
    <property type="protein sequence ID" value="CAP14208.1"/>
    <property type="molecule type" value="Genomic_DNA"/>
</dbReference>
<dbReference type="RefSeq" id="WP_010903217.1">
    <property type="nucleotide sequence ID" value="NC_010364.1"/>
</dbReference>
<dbReference type="SMR" id="B0R639"/>
<dbReference type="EnsemblBacteria" id="CAP14208">
    <property type="protein sequence ID" value="CAP14208"/>
    <property type="gene ID" value="OE_3357R"/>
</dbReference>
<dbReference type="KEGG" id="hsl:OE_3357R"/>
<dbReference type="HOGENOM" id="CLU_080597_2_1_2"/>
<dbReference type="PhylomeDB" id="B0R639"/>
<dbReference type="Proteomes" id="UP000001321">
    <property type="component" value="Chromosome"/>
</dbReference>
<dbReference type="GO" id="GO:1990904">
    <property type="term" value="C:ribonucleoprotein complex"/>
    <property type="evidence" value="ECO:0007669"/>
    <property type="project" value="UniProtKB-KW"/>
</dbReference>
<dbReference type="GO" id="GO:0005840">
    <property type="term" value="C:ribosome"/>
    <property type="evidence" value="ECO:0007669"/>
    <property type="project" value="UniProtKB-KW"/>
</dbReference>
<dbReference type="GO" id="GO:0003735">
    <property type="term" value="F:structural constituent of ribosome"/>
    <property type="evidence" value="ECO:0007669"/>
    <property type="project" value="InterPro"/>
</dbReference>
<dbReference type="GO" id="GO:0006412">
    <property type="term" value="P:translation"/>
    <property type="evidence" value="ECO:0007669"/>
    <property type="project" value="UniProtKB-UniRule"/>
</dbReference>
<dbReference type="CDD" id="cd11382">
    <property type="entry name" value="Ribosomal_S8e"/>
    <property type="match status" value="1"/>
</dbReference>
<dbReference type="Gene3D" id="2.40.10.310">
    <property type="match status" value="1"/>
</dbReference>
<dbReference type="HAMAP" id="MF_00029">
    <property type="entry name" value="Ribosomal_eS8"/>
    <property type="match status" value="1"/>
</dbReference>
<dbReference type="InterPro" id="IPR001047">
    <property type="entry name" value="Ribosomal_eS8"/>
</dbReference>
<dbReference type="InterPro" id="IPR018283">
    <property type="entry name" value="Ribosomal_eS8_CS"/>
</dbReference>
<dbReference type="InterPro" id="IPR020919">
    <property type="entry name" value="Ribosomal_protein_eS8_arc"/>
</dbReference>
<dbReference type="InterPro" id="IPR022309">
    <property type="entry name" value="Ribosomal_Se8/biogenesis_NSA2"/>
</dbReference>
<dbReference type="NCBIfam" id="TIGR00307">
    <property type="entry name" value="eS8"/>
    <property type="match status" value="1"/>
</dbReference>
<dbReference type="PANTHER" id="PTHR10394">
    <property type="entry name" value="40S RIBOSOMAL PROTEIN S8"/>
    <property type="match status" value="1"/>
</dbReference>
<dbReference type="Pfam" id="PF01201">
    <property type="entry name" value="Ribosomal_S8e"/>
    <property type="match status" value="1"/>
</dbReference>
<dbReference type="PROSITE" id="PS01193">
    <property type="entry name" value="RIBOSOMAL_S8E"/>
    <property type="match status" value="1"/>
</dbReference>
<reference key="1">
    <citation type="journal article" date="2008" name="Genomics">
        <title>Evolution in the laboratory: the genome of Halobacterium salinarum strain R1 compared to that of strain NRC-1.</title>
        <authorList>
            <person name="Pfeiffer F."/>
            <person name="Schuster S.C."/>
            <person name="Broicher A."/>
            <person name="Falb M."/>
            <person name="Palm P."/>
            <person name="Rodewald K."/>
            <person name="Ruepp A."/>
            <person name="Soppa J."/>
            <person name="Tittor J."/>
            <person name="Oesterhelt D."/>
        </authorList>
    </citation>
    <scope>NUCLEOTIDE SEQUENCE [LARGE SCALE GENOMIC DNA]</scope>
    <source>
        <strain>ATCC 29341 / DSM 671 / R1</strain>
    </source>
</reference>
<organism>
    <name type="scientific">Halobacterium salinarum (strain ATCC 29341 / DSM 671 / R1)</name>
    <dbReference type="NCBI Taxonomy" id="478009"/>
    <lineage>
        <taxon>Archaea</taxon>
        <taxon>Methanobacteriati</taxon>
        <taxon>Methanobacteriota</taxon>
        <taxon>Stenosarchaea group</taxon>
        <taxon>Halobacteria</taxon>
        <taxon>Halobacteriales</taxon>
        <taxon>Halobacteriaceae</taxon>
        <taxon>Halobacterium</taxon>
        <taxon>Halobacterium salinarum NRC-34001</taxon>
    </lineage>
</organism>
<comment type="subunit">
    <text evidence="1">Part of the 30S ribosomal subunit.</text>
</comment>
<comment type="similarity">
    <text evidence="1">Belongs to the eukaryotic ribosomal protein eS8 family.</text>
</comment>
<name>RS8E_HALS3</name>